<comment type="function">
    <text evidence="1">Sequence-specific transcription factor which is part of a developmental regulatory system that provides cells with specific positional identities on the anterior-posterior axis.</text>
</comment>
<comment type="subcellular location">
    <subcellularLocation>
        <location evidence="2">Nucleus</location>
    </subcellularLocation>
</comment>
<comment type="similarity">
    <text evidence="4">Belongs to the Abd-B homeobox family.</text>
</comment>
<dbReference type="EMBL" id="DQ481664">
    <property type="protein sequence ID" value="ABF22400.1"/>
    <property type="molecule type" value="Genomic_DNA"/>
</dbReference>
<dbReference type="RefSeq" id="XP_003966152.1">
    <property type="nucleotide sequence ID" value="XM_003966103.2"/>
</dbReference>
<dbReference type="SMR" id="Q1KKZ4"/>
<dbReference type="FunCoup" id="Q1KKZ4">
    <property type="interactions" value="91"/>
</dbReference>
<dbReference type="STRING" id="31033.ENSTRUP00000073579"/>
<dbReference type="GeneID" id="101079592"/>
<dbReference type="KEGG" id="tru:101079592"/>
<dbReference type="CTD" id="30391"/>
<dbReference type="eggNOG" id="KOG0487">
    <property type="taxonomic scope" value="Eukaryota"/>
</dbReference>
<dbReference type="InParanoid" id="Q1KKZ4"/>
<dbReference type="OrthoDB" id="6159439at2759"/>
<dbReference type="Proteomes" id="UP000005226">
    <property type="component" value="Unplaced"/>
</dbReference>
<dbReference type="GO" id="GO:0005634">
    <property type="term" value="C:nucleus"/>
    <property type="evidence" value="ECO:0007669"/>
    <property type="project" value="UniProtKB-SubCell"/>
</dbReference>
<dbReference type="GO" id="GO:0000981">
    <property type="term" value="F:DNA-binding transcription factor activity, RNA polymerase II-specific"/>
    <property type="evidence" value="ECO:0007669"/>
    <property type="project" value="InterPro"/>
</dbReference>
<dbReference type="GO" id="GO:0000978">
    <property type="term" value="F:RNA polymerase II cis-regulatory region sequence-specific DNA binding"/>
    <property type="evidence" value="ECO:0007669"/>
    <property type="project" value="TreeGrafter"/>
</dbReference>
<dbReference type="CDD" id="cd00086">
    <property type="entry name" value="homeodomain"/>
    <property type="match status" value="1"/>
</dbReference>
<dbReference type="FunFam" id="1.10.10.60:FF:000018">
    <property type="entry name" value="Homeobox A10"/>
    <property type="match status" value="1"/>
</dbReference>
<dbReference type="Gene3D" id="1.10.10.60">
    <property type="entry name" value="Homeodomain-like"/>
    <property type="match status" value="1"/>
</dbReference>
<dbReference type="InterPro" id="IPR001356">
    <property type="entry name" value="HD"/>
</dbReference>
<dbReference type="InterPro" id="IPR020479">
    <property type="entry name" value="HD_metazoa"/>
</dbReference>
<dbReference type="InterPro" id="IPR017970">
    <property type="entry name" value="Homeobox_CS"/>
</dbReference>
<dbReference type="InterPro" id="IPR009057">
    <property type="entry name" value="Homeodomain-like_sf"/>
</dbReference>
<dbReference type="InterPro" id="IPR046333">
    <property type="entry name" value="HXA10/ABDB-like"/>
</dbReference>
<dbReference type="PANTHER" id="PTHR45874">
    <property type="entry name" value="HOMEOBOX PROTEIN ABDOMINAL-B"/>
    <property type="match status" value="1"/>
</dbReference>
<dbReference type="PANTHER" id="PTHR45874:SF1">
    <property type="entry name" value="HOMEOBOX PROTEIN HOX-A10"/>
    <property type="match status" value="1"/>
</dbReference>
<dbReference type="Pfam" id="PF00046">
    <property type="entry name" value="Homeodomain"/>
    <property type="match status" value="1"/>
</dbReference>
<dbReference type="PRINTS" id="PR00024">
    <property type="entry name" value="HOMEOBOX"/>
</dbReference>
<dbReference type="SMART" id="SM00389">
    <property type="entry name" value="HOX"/>
    <property type="match status" value="1"/>
</dbReference>
<dbReference type="SUPFAM" id="SSF46689">
    <property type="entry name" value="Homeodomain-like"/>
    <property type="match status" value="1"/>
</dbReference>
<dbReference type="PROSITE" id="PS00027">
    <property type="entry name" value="HOMEOBOX_1"/>
    <property type="match status" value="1"/>
</dbReference>
<dbReference type="PROSITE" id="PS50071">
    <property type="entry name" value="HOMEOBOX_2"/>
    <property type="match status" value="1"/>
</dbReference>
<proteinExistence type="inferred from homology"/>
<gene>
    <name type="primary">hoxa10b</name>
</gene>
<name>HXAAB_TAKRU</name>
<organism>
    <name type="scientific">Takifugu rubripes</name>
    <name type="common">Japanese pufferfish</name>
    <name type="synonym">Fugu rubripes</name>
    <dbReference type="NCBI Taxonomy" id="31033"/>
    <lineage>
        <taxon>Eukaryota</taxon>
        <taxon>Metazoa</taxon>
        <taxon>Chordata</taxon>
        <taxon>Craniata</taxon>
        <taxon>Vertebrata</taxon>
        <taxon>Euteleostomi</taxon>
        <taxon>Actinopterygii</taxon>
        <taxon>Neopterygii</taxon>
        <taxon>Teleostei</taxon>
        <taxon>Neoteleostei</taxon>
        <taxon>Acanthomorphata</taxon>
        <taxon>Eupercaria</taxon>
        <taxon>Tetraodontiformes</taxon>
        <taxon>Tetradontoidea</taxon>
        <taxon>Tetraodontidae</taxon>
        <taxon>Takifugu</taxon>
    </lineage>
</organism>
<sequence>MTCPNNQAGNSFFVDSLINVRPDSGSYYQSNGVYLPPGSEFSYGLSGGSCFPGIGKRNEPSAQSVISSPAPYVQGMETWLEASRPCRVDQPRGQHMAQCSFSPNIKEESTYCLYESDKCPKGATVDDISYSASSCPVTSTFPVPGYFRLSQTYASSRHYHDAHPNTDHFTLQQSARPDSRSSHRQAASAEPEQRANREESPVCAPCVPVREEDSRLSSEGSSSPEPAETPSLECPEKSGKGDGKNETAANWLTAKSGRKKRCPYTKHQTLELEKEFLFNMYLTRERRLEISRSVHLTDRQVKIWFQNRRMKLKKMTRENRIRELSNSFSFS</sequence>
<feature type="chain" id="PRO_0000265970" description="Homeobox protein Hox-A10b">
    <location>
        <begin position="1"/>
        <end position="331"/>
    </location>
</feature>
<feature type="DNA-binding region" description="Homeobox" evidence="2">
    <location>
        <begin position="257"/>
        <end position="316"/>
    </location>
</feature>
<feature type="region of interest" description="Disordered" evidence="3">
    <location>
        <begin position="158"/>
        <end position="251"/>
    </location>
</feature>
<feature type="compositionally biased region" description="Polar residues" evidence="3">
    <location>
        <begin position="167"/>
        <end position="176"/>
    </location>
</feature>
<feature type="compositionally biased region" description="Basic and acidic residues" evidence="3">
    <location>
        <begin position="191"/>
        <end position="200"/>
    </location>
</feature>
<feature type="compositionally biased region" description="Low complexity" evidence="3">
    <location>
        <begin position="217"/>
        <end position="233"/>
    </location>
</feature>
<feature type="compositionally biased region" description="Basic and acidic residues" evidence="3">
    <location>
        <begin position="234"/>
        <end position="245"/>
    </location>
</feature>
<evidence type="ECO:0000250" key="1"/>
<evidence type="ECO:0000255" key="2">
    <source>
        <dbReference type="PROSITE-ProRule" id="PRU00108"/>
    </source>
</evidence>
<evidence type="ECO:0000256" key="3">
    <source>
        <dbReference type="SAM" id="MobiDB-lite"/>
    </source>
</evidence>
<evidence type="ECO:0000305" key="4"/>
<reference key="1">
    <citation type="journal article" date="2006" name="Proc. Natl. Acad. Sci. U.S.A.">
        <title>Highly conserved syntenic blocks at the vertebrate Hox loci and conserved regulatory elements within and outside Hox gene clusters.</title>
        <authorList>
            <person name="Lee A.P."/>
            <person name="Koh E.G.L."/>
            <person name="Tay A."/>
            <person name="Brenner S."/>
            <person name="Venkatesh B."/>
        </authorList>
    </citation>
    <scope>NUCLEOTIDE SEQUENCE [GENOMIC DNA]</scope>
</reference>
<accession>Q1KKZ4</accession>
<keyword id="KW-0217">Developmental protein</keyword>
<keyword id="KW-0238">DNA-binding</keyword>
<keyword id="KW-0371">Homeobox</keyword>
<keyword id="KW-0539">Nucleus</keyword>
<keyword id="KW-1185">Reference proteome</keyword>
<keyword id="KW-0804">Transcription</keyword>
<keyword id="KW-0805">Transcription regulation</keyword>
<protein>
    <recommendedName>
        <fullName>Homeobox protein Hox-A10b</fullName>
    </recommendedName>
</protein>